<dbReference type="EC" id="6.3.2.9" evidence="1"/>
<dbReference type="EMBL" id="CP000110">
    <property type="protein sequence ID" value="ABB35892.1"/>
    <property type="molecule type" value="Genomic_DNA"/>
</dbReference>
<dbReference type="RefSeq" id="WP_011365098.1">
    <property type="nucleotide sequence ID" value="NC_007516.1"/>
</dbReference>
<dbReference type="SMR" id="Q3AHP0"/>
<dbReference type="STRING" id="110662.Syncc9605_2153"/>
<dbReference type="KEGG" id="syd:Syncc9605_2153"/>
<dbReference type="eggNOG" id="COG0771">
    <property type="taxonomic scope" value="Bacteria"/>
</dbReference>
<dbReference type="HOGENOM" id="CLU_032540_0_0_3"/>
<dbReference type="OrthoDB" id="9809796at2"/>
<dbReference type="UniPathway" id="UPA00219"/>
<dbReference type="GO" id="GO:0005737">
    <property type="term" value="C:cytoplasm"/>
    <property type="evidence" value="ECO:0007669"/>
    <property type="project" value="UniProtKB-SubCell"/>
</dbReference>
<dbReference type="GO" id="GO:0005524">
    <property type="term" value="F:ATP binding"/>
    <property type="evidence" value="ECO:0007669"/>
    <property type="project" value="UniProtKB-UniRule"/>
</dbReference>
<dbReference type="GO" id="GO:0004326">
    <property type="term" value="F:tetrahydrofolylpolyglutamate synthase activity"/>
    <property type="evidence" value="ECO:0007669"/>
    <property type="project" value="InterPro"/>
</dbReference>
<dbReference type="GO" id="GO:0008764">
    <property type="term" value="F:UDP-N-acetylmuramoylalanine-D-glutamate ligase activity"/>
    <property type="evidence" value="ECO:0007669"/>
    <property type="project" value="UniProtKB-UniRule"/>
</dbReference>
<dbReference type="GO" id="GO:0051301">
    <property type="term" value="P:cell division"/>
    <property type="evidence" value="ECO:0007669"/>
    <property type="project" value="UniProtKB-KW"/>
</dbReference>
<dbReference type="GO" id="GO:0071555">
    <property type="term" value="P:cell wall organization"/>
    <property type="evidence" value="ECO:0007669"/>
    <property type="project" value="UniProtKB-KW"/>
</dbReference>
<dbReference type="GO" id="GO:0009252">
    <property type="term" value="P:peptidoglycan biosynthetic process"/>
    <property type="evidence" value="ECO:0007669"/>
    <property type="project" value="UniProtKB-UniRule"/>
</dbReference>
<dbReference type="GO" id="GO:0008360">
    <property type="term" value="P:regulation of cell shape"/>
    <property type="evidence" value="ECO:0007669"/>
    <property type="project" value="UniProtKB-KW"/>
</dbReference>
<dbReference type="Gene3D" id="3.90.190.20">
    <property type="entry name" value="Mur ligase, C-terminal domain"/>
    <property type="match status" value="1"/>
</dbReference>
<dbReference type="Gene3D" id="3.40.1190.10">
    <property type="entry name" value="Mur-like, catalytic domain"/>
    <property type="match status" value="1"/>
</dbReference>
<dbReference type="Gene3D" id="3.40.50.720">
    <property type="entry name" value="NAD(P)-binding Rossmann-like Domain"/>
    <property type="match status" value="1"/>
</dbReference>
<dbReference type="HAMAP" id="MF_00639">
    <property type="entry name" value="MurD"/>
    <property type="match status" value="1"/>
</dbReference>
<dbReference type="InterPro" id="IPR018109">
    <property type="entry name" value="Folylpolyglutamate_synth_CS"/>
</dbReference>
<dbReference type="InterPro" id="IPR036565">
    <property type="entry name" value="Mur-like_cat_sf"/>
</dbReference>
<dbReference type="InterPro" id="IPR036615">
    <property type="entry name" value="Mur_ligase_C_dom_sf"/>
</dbReference>
<dbReference type="InterPro" id="IPR013221">
    <property type="entry name" value="Mur_ligase_cen"/>
</dbReference>
<dbReference type="InterPro" id="IPR005762">
    <property type="entry name" value="MurD"/>
</dbReference>
<dbReference type="NCBIfam" id="TIGR01087">
    <property type="entry name" value="murD"/>
    <property type="match status" value="1"/>
</dbReference>
<dbReference type="PANTHER" id="PTHR43692">
    <property type="entry name" value="UDP-N-ACETYLMURAMOYLALANINE--D-GLUTAMATE LIGASE"/>
    <property type="match status" value="1"/>
</dbReference>
<dbReference type="PANTHER" id="PTHR43692:SF1">
    <property type="entry name" value="UDP-N-ACETYLMURAMOYLALANINE--D-GLUTAMATE LIGASE"/>
    <property type="match status" value="1"/>
</dbReference>
<dbReference type="Pfam" id="PF08245">
    <property type="entry name" value="Mur_ligase_M"/>
    <property type="match status" value="1"/>
</dbReference>
<dbReference type="Pfam" id="PF21799">
    <property type="entry name" value="MurD-like_N"/>
    <property type="match status" value="1"/>
</dbReference>
<dbReference type="SUPFAM" id="SSF51984">
    <property type="entry name" value="MurCD N-terminal domain"/>
    <property type="match status" value="1"/>
</dbReference>
<dbReference type="SUPFAM" id="SSF53623">
    <property type="entry name" value="MurD-like peptide ligases, catalytic domain"/>
    <property type="match status" value="1"/>
</dbReference>
<dbReference type="SUPFAM" id="SSF53244">
    <property type="entry name" value="MurD-like peptide ligases, peptide-binding domain"/>
    <property type="match status" value="1"/>
</dbReference>
<protein>
    <recommendedName>
        <fullName evidence="1">UDP-N-acetylmuramoylalanine--D-glutamate ligase</fullName>
        <ecNumber evidence="1">6.3.2.9</ecNumber>
    </recommendedName>
    <alternativeName>
        <fullName evidence="1">D-glutamic acid-adding enzyme</fullName>
    </alternativeName>
    <alternativeName>
        <fullName evidence="1">UDP-N-acetylmuramoyl-L-alanyl-D-glutamate synthetase</fullName>
    </alternativeName>
</protein>
<reference key="1">
    <citation type="submission" date="2005-07" db="EMBL/GenBank/DDBJ databases">
        <title>Complete sequence of Synechococcus sp. CC9605.</title>
        <authorList>
            <consortium name="US DOE Joint Genome Institute"/>
            <person name="Copeland A."/>
            <person name="Lucas S."/>
            <person name="Lapidus A."/>
            <person name="Barry K."/>
            <person name="Detter J.C."/>
            <person name="Glavina T."/>
            <person name="Hammon N."/>
            <person name="Israni S."/>
            <person name="Pitluck S."/>
            <person name="Schmutz J."/>
            <person name="Martinez M."/>
            <person name="Larimer F."/>
            <person name="Land M."/>
            <person name="Kyrpides N."/>
            <person name="Ivanova N."/>
            <person name="Richardson P."/>
        </authorList>
    </citation>
    <scope>NUCLEOTIDE SEQUENCE [LARGE SCALE GENOMIC DNA]</scope>
    <source>
        <strain>CC9605</strain>
    </source>
</reference>
<name>MURD_SYNSC</name>
<organism>
    <name type="scientific">Synechococcus sp. (strain CC9605)</name>
    <dbReference type="NCBI Taxonomy" id="110662"/>
    <lineage>
        <taxon>Bacteria</taxon>
        <taxon>Bacillati</taxon>
        <taxon>Cyanobacteriota</taxon>
        <taxon>Cyanophyceae</taxon>
        <taxon>Synechococcales</taxon>
        <taxon>Synechococcaceae</taxon>
        <taxon>Synechococcus</taxon>
    </lineage>
</organism>
<evidence type="ECO:0000255" key="1">
    <source>
        <dbReference type="HAMAP-Rule" id="MF_00639"/>
    </source>
</evidence>
<gene>
    <name evidence="1" type="primary">murD</name>
    <name type="ordered locus">Syncc9605_2153</name>
</gene>
<sequence length="461" mass="49457">MTRTIVVGLGRSGLGAARLLKQQNHDVVVFERGNNEALQHTSKTLAEEGIQVVLGQPLTLQSFDAWRDNLDAVVIGPGIPWDHPTLVQLRSEGVQVRGEMDTAWDALQQIPWIGITGTNGKTTVTHLLSHVLEAAGLTAPMGGNIGLSAAELACQIGSGAKPRPDWLVMELSSYQIEAAPAVAPKIGIWTTLTPDHLERHGSLEAYRAIKRGLLERSECALFNADDPDLRQQRSSWNRGTWVSSEGAHPDNQPADLWIDDEGMVRNNTTRLFAADVLAMPGRHNRQNLLLVTAAALEAGLSPQQIADALRTFPGVPHRLEQLGTLAGASVFNDSKATNYDAAEVGLRAVQGPVVVLAGGQTKQGDASGWLKQLQSKACSLILFGAGADELASLAKAAGYPGELLQCPELESAVNLAEGAVQRHQASSLLLSPACASFDQYRDFEARGEHFRTLINPLLDEA</sequence>
<feature type="chain" id="PRO_0000257252" description="UDP-N-acetylmuramoylalanine--D-glutamate ligase">
    <location>
        <begin position="1"/>
        <end position="461"/>
    </location>
</feature>
<feature type="binding site" evidence="1">
    <location>
        <begin position="117"/>
        <end position="123"/>
    </location>
    <ligand>
        <name>ATP</name>
        <dbReference type="ChEBI" id="CHEBI:30616"/>
    </ligand>
</feature>
<proteinExistence type="inferred from homology"/>
<accession>Q3AHP0</accession>
<keyword id="KW-0067">ATP-binding</keyword>
<keyword id="KW-0131">Cell cycle</keyword>
<keyword id="KW-0132">Cell division</keyword>
<keyword id="KW-0133">Cell shape</keyword>
<keyword id="KW-0961">Cell wall biogenesis/degradation</keyword>
<keyword id="KW-0963">Cytoplasm</keyword>
<keyword id="KW-0436">Ligase</keyword>
<keyword id="KW-0547">Nucleotide-binding</keyword>
<keyword id="KW-0573">Peptidoglycan synthesis</keyword>
<comment type="function">
    <text evidence="1">Cell wall formation. Catalyzes the addition of glutamate to the nucleotide precursor UDP-N-acetylmuramoyl-L-alanine (UMA).</text>
</comment>
<comment type="catalytic activity">
    <reaction evidence="1">
        <text>UDP-N-acetyl-alpha-D-muramoyl-L-alanine + D-glutamate + ATP = UDP-N-acetyl-alpha-D-muramoyl-L-alanyl-D-glutamate + ADP + phosphate + H(+)</text>
        <dbReference type="Rhea" id="RHEA:16429"/>
        <dbReference type="ChEBI" id="CHEBI:15378"/>
        <dbReference type="ChEBI" id="CHEBI:29986"/>
        <dbReference type="ChEBI" id="CHEBI:30616"/>
        <dbReference type="ChEBI" id="CHEBI:43474"/>
        <dbReference type="ChEBI" id="CHEBI:83898"/>
        <dbReference type="ChEBI" id="CHEBI:83900"/>
        <dbReference type="ChEBI" id="CHEBI:456216"/>
        <dbReference type="EC" id="6.3.2.9"/>
    </reaction>
</comment>
<comment type="pathway">
    <text evidence="1">Cell wall biogenesis; peptidoglycan biosynthesis.</text>
</comment>
<comment type="subcellular location">
    <subcellularLocation>
        <location evidence="1">Cytoplasm</location>
    </subcellularLocation>
</comment>
<comment type="similarity">
    <text evidence="1">Belongs to the MurCDEF family.</text>
</comment>